<name>PIMT_STAMF</name>
<sequence length="225" mass="25568">MRSRFENERRRVIDYLRRIGIIRSDKVYRALLSVPREEFVPPQYREYAYIDEPLPIGFGQTISAIHMVAIMTEELDPEPGNIVLEIGTGSGYQAAVLAEIVAKQDPNRRGHVYTVERIPELAEFAKKNLERTGYIEYVTVIVGDGTKGYPEKAPYDRIIVTAAAPEVPKPLLKQLRVGGKLVIPVGDRFVQRLLSVKRVGEHEYVTKHGIECMFVPLIGEYGWKD</sequence>
<evidence type="ECO:0000255" key="1">
    <source>
        <dbReference type="HAMAP-Rule" id="MF_00090"/>
    </source>
</evidence>
<keyword id="KW-0963">Cytoplasm</keyword>
<keyword id="KW-0489">Methyltransferase</keyword>
<keyword id="KW-1185">Reference proteome</keyword>
<keyword id="KW-0949">S-adenosyl-L-methionine</keyword>
<keyword id="KW-0808">Transferase</keyword>
<feature type="chain" id="PRO_0000351973" description="Protein-L-isoaspartate O-methyltransferase">
    <location>
        <begin position="1"/>
        <end position="225"/>
    </location>
</feature>
<feature type="active site" evidence="1">
    <location>
        <position position="63"/>
    </location>
</feature>
<organism>
    <name type="scientific">Staphylothermus marinus (strain ATCC 43588 / DSM 3639 / JCM 9404 / F1)</name>
    <dbReference type="NCBI Taxonomy" id="399550"/>
    <lineage>
        <taxon>Archaea</taxon>
        <taxon>Thermoproteota</taxon>
        <taxon>Thermoprotei</taxon>
        <taxon>Desulfurococcales</taxon>
        <taxon>Desulfurococcaceae</taxon>
        <taxon>Staphylothermus</taxon>
    </lineage>
</organism>
<comment type="function">
    <text evidence="1">Catalyzes the methyl esterification of L-isoaspartyl residues in peptides and proteins that result from spontaneous decomposition of normal L-aspartyl and L-asparaginyl residues. It plays a role in the repair and/or degradation of damaged proteins.</text>
</comment>
<comment type="catalytic activity">
    <reaction evidence="1">
        <text>[protein]-L-isoaspartate + S-adenosyl-L-methionine = [protein]-L-isoaspartate alpha-methyl ester + S-adenosyl-L-homocysteine</text>
        <dbReference type="Rhea" id="RHEA:12705"/>
        <dbReference type="Rhea" id="RHEA-COMP:12143"/>
        <dbReference type="Rhea" id="RHEA-COMP:12144"/>
        <dbReference type="ChEBI" id="CHEBI:57856"/>
        <dbReference type="ChEBI" id="CHEBI:59789"/>
        <dbReference type="ChEBI" id="CHEBI:90596"/>
        <dbReference type="ChEBI" id="CHEBI:90598"/>
        <dbReference type="EC" id="2.1.1.77"/>
    </reaction>
</comment>
<comment type="subcellular location">
    <subcellularLocation>
        <location evidence="1">Cytoplasm</location>
    </subcellularLocation>
</comment>
<comment type="similarity">
    <text evidence="1">Belongs to the methyltransferase superfamily. L-isoaspartyl/D-aspartyl protein methyltransferase family.</text>
</comment>
<reference key="1">
    <citation type="journal article" date="2009" name="BMC Genomics">
        <title>The complete genome sequence of Staphylothermus marinus reveals differences in sulfur metabolism among heterotrophic Crenarchaeota.</title>
        <authorList>
            <person name="Anderson I.J."/>
            <person name="Dharmarajan L."/>
            <person name="Rodriguez J."/>
            <person name="Hooper S."/>
            <person name="Porat I."/>
            <person name="Ulrich L.E."/>
            <person name="Elkins J.G."/>
            <person name="Mavromatis K."/>
            <person name="Sun H."/>
            <person name="Land M."/>
            <person name="Lapidus A."/>
            <person name="Lucas S."/>
            <person name="Barry K."/>
            <person name="Huber H."/>
            <person name="Zhulin I.B."/>
            <person name="Whitman W.B."/>
            <person name="Mukhopadhyay B."/>
            <person name="Woese C."/>
            <person name="Bristow J."/>
            <person name="Kyrpides N."/>
        </authorList>
    </citation>
    <scope>NUCLEOTIDE SEQUENCE [LARGE SCALE GENOMIC DNA]</scope>
    <source>
        <strain>ATCC 43588 / DSM 3639 / JCM 9404 / F1</strain>
    </source>
</reference>
<reference key="2">
    <citation type="journal article" date="2009" name="Stand. Genomic Sci.">
        <title>Complete genome sequence of Staphylothermus marinus Stetter and Fiala 1986 type strain F1.</title>
        <authorList>
            <person name="Anderson I.J."/>
            <person name="Sun H."/>
            <person name="Lapidus A."/>
            <person name="Copeland A."/>
            <person name="Glavina Del Rio T."/>
            <person name="Tice H."/>
            <person name="Dalin E."/>
            <person name="Lucas S."/>
            <person name="Barry K."/>
            <person name="Land M."/>
            <person name="Richardson P."/>
            <person name="Huber H."/>
            <person name="Kyrpides N.C."/>
        </authorList>
    </citation>
    <scope>NUCLEOTIDE SEQUENCE [LARGE SCALE GENOMIC DNA]</scope>
    <source>
        <strain>ATCC 43588 / DSM 3639 / JCM 9404 / F1</strain>
    </source>
</reference>
<accession>A3DMG3</accession>
<protein>
    <recommendedName>
        <fullName evidence="1">Protein-L-isoaspartate O-methyltransferase</fullName>
        <ecNumber evidence="1">2.1.1.77</ecNumber>
    </recommendedName>
    <alternativeName>
        <fullName evidence="1">L-isoaspartyl protein carboxyl methyltransferase</fullName>
    </alternativeName>
    <alternativeName>
        <fullName evidence="1">Protein L-isoaspartyl methyltransferase</fullName>
    </alternativeName>
    <alternativeName>
        <fullName evidence="1">Protein-beta-aspartate methyltransferase</fullName>
        <shortName evidence="1">PIMT</shortName>
    </alternativeName>
</protein>
<gene>
    <name evidence="1" type="primary">pcm</name>
    <name type="ordered locus">Smar_0720</name>
</gene>
<dbReference type="EC" id="2.1.1.77" evidence="1"/>
<dbReference type="EMBL" id="CP000575">
    <property type="protein sequence ID" value="ABN69823.1"/>
    <property type="molecule type" value="Genomic_DNA"/>
</dbReference>
<dbReference type="RefSeq" id="WP_011839014.1">
    <property type="nucleotide sequence ID" value="NC_009033.1"/>
</dbReference>
<dbReference type="SMR" id="A3DMG3"/>
<dbReference type="STRING" id="399550.Smar_0720"/>
<dbReference type="GeneID" id="4908069"/>
<dbReference type="KEGG" id="smr:Smar_0720"/>
<dbReference type="eggNOG" id="arCOG00976">
    <property type="taxonomic scope" value="Archaea"/>
</dbReference>
<dbReference type="HOGENOM" id="CLU_055432_2_0_2"/>
<dbReference type="OrthoDB" id="33618at2157"/>
<dbReference type="Proteomes" id="UP000000254">
    <property type="component" value="Chromosome"/>
</dbReference>
<dbReference type="GO" id="GO:0005737">
    <property type="term" value="C:cytoplasm"/>
    <property type="evidence" value="ECO:0007669"/>
    <property type="project" value="UniProtKB-SubCell"/>
</dbReference>
<dbReference type="GO" id="GO:0004719">
    <property type="term" value="F:protein-L-isoaspartate (D-aspartate) O-methyltransferase activity"/>
    <property type="evidence" value="ECO:0007669"/>
    <property type="project" value="UniProtKB-UniRule"/>
</dbReference>
<dbReference type="GO" id="GO:0032259">
    <property type="term" value="P:methylation"/>
    <property type="evidence" value="ECO:0007669"/>
    <property type="project" value="UniProtKB-KW"/>
</dbReference>
<dbReference type="GO" id="GO:0036211">
    <property type="term" value="P:protein modification process"/>
    <property type="evidence" value="ECO:0007669"/>
    <property type="project" value="UniProtKB-UniRule"/>
</dbReference>
<dbReference type="GO" id="GO:0030091">
    <property type="term" value="P:protein repair"/>
    <property type="evidence" value="ECO:0007669"/>
    <property type="project" value="UniProtKB-UniRule"/>
</dbReference>
<dbReference type="CDD" id="cd02440">
    <property type="entry name" value="AdoMet_MTases"/>
    <property type="match status" value="1"/>
</dbReference>
<dbReference type="FunFam" id="3.40.50.150:FF:000010">
    <property type="entry name" value="Protein-L-isoaspartate O-methyltransferase"/>
    <property type="match status" value="1"/>
</dbReference>
<dbReference type="Gene3D" id="3.40.50.150">
    <property type="entry name" value="Vaccinia Virus protein VP39"/>
    <property type="match status" value="1"/>
</dbReference>
<dbReference type="HAMAP" id="MF_00090">
    <property type="entry name" value="PIMT"/>
    <property type="match status" value="1"/>
</dbReference>
<dbReference type="InterPro" id="IPR000682">
    <property type="entry name" value="PCMT"/>
</dbReference>
<dbReference type="InterPro" id="IPR029063">
    <property type="entry name" value="SAM-dependent_MTases_sf"/>
</dbReference>
<dbReference type="NCBIfam" id="TIGR00080">
    <property type="entry name" value="pimt"/>
    <property type="match status" value="1"/>
</dbReference>
<dbReference type="NCBIfam" id="NF001453">
    <property type="entry name" value="PRK00312.1"/>
    <property type="match status" value="1"/>
</dbReference>
<dbReference type="NCBIfam" id="NF010549">
    <property type="entry name" value="PRK13942.1"/>
    <property type="match status" value="1"/>
</dbReference>
<dbReference type="PANTHER" id="PTHR11579">
    <property type="entry name" value="PROTEIN-L-ISOASPARTATE O-METHYLTRANSFERASE"/>
    <property type="match status" value="1"/>
</dbReference>
<dbReference type="PANTHER" id="PTHR11579:SF0">
    <property type="entry name" value="PROTEIN-L-ISOASPARTATE(D-ASPARTATE) O-METHYLTRANSFERASE"/>
    <property type="match status" value="1"/>
</dbReference>
<dbReference type="Pfam" id="PF01135">
    <property type="entry name" value="PCMT"/>
    <property type="match status" value="1"/>
</dbReference>
<dbReference type="SUPFAM" id="SSF53335">
    <property type="entry name" value="S-adenosyl-L-methionine-dependent methyltransferases"/>
    <property type="match status" value="1"/>
</dbReference>
<dbReference type="PROSITE" id="PS01279">
    <property type="entry name" value="PCMT"/>
    <property type="match status" value="1"/>
</dbReference>
<proteinExistence type="inferred from homology"/>